<comment type="function">
    <text evidence="1">Catalyzes the conversion of (8S)-3',8-cyclo-7,8-dihydroguanosine 5'-triphosphate to cyclic pyranopterin monophosphate (cPMP).</text>
</comment>
<comment type="catalytic activity">
    <reaction evidence="1">
        <text>(8S)-3',8-cyclo-7,8-dihydroguanosine 5'-triphosphate = cyclic pyranopterin phosphate + diphosphate</text>
        <dbReference type="Rhea" id="RHEA:49580"/>
        <dbReference type="ChEBI" id="CHEBI:33019"/>
        <dbReference type="ChEBI" id="CHEBI:59648"/>
        <dbReference type="ChEBI" id="CHEBI:131766"/>
        <dbReference type="EC" id="4.6.1.17"/>
    </reaction>
</comment>
<comment type="pathway">
    <text evidence="1">Cofactor biosynthesis; molybdopterin biosynthesis.</text>
</comment>
<comment type="subunit">
    <text evidence="1">Homohexamer; trimer of dimers.</text>
</comment>
<comment type="similarity">
    <text evidence="1">Belongs to the MoaC family.</text>
</comment>
<dbReference type="EC" id="4.6.1.17" evidence="1"/>
<dbReference type="EMBL" id="CP000653">
    <property type="protein sequence ID" value="ABP59956.1"/>
    <property type="molecule type" value="Genomic_DNA"/>
</dbReference>
<dbReference type="RefSeq" id="WP_012016675.1">
    <property type="nucleotide sequence ID" value="NC_009436.1"/>
</dbReference>
<dbReference type="SMR" id="A4W8C6"/>
<dbReference type="STRING" id="399742.Ent638_1275"/>
<dbReference type="KEGG" id="ent:Ent638_1275"/>
<dbReference type="eggNOG" id="COG0315">
    <property type="taxonomic scope" value="Bacteria"/>
</dbReference>
<dbReference type="HOGENOM" id="CLU_074693_1_1_6"/>
<dbReference type="OrthoDB" id="9794429at2"/>
<dbReference type="UniPathway" id="UPA00344"/>
<dbReference type="Proteomes" id="UP000000230">
    <property type="component" value="Chromosome"/>
</dbReference>
<dbReference type="GO" id="GO:0061799">
    <property type="term" value="F:cyclic pyranopterin monophosphate synthase activity"/>
    <property type="evidence" value="ECO:0007669"/>
    <property type="project" value="UniProtKB-UniRule"/>
</dbReference>
<dbReference type="GO" id="GO:0006777">
    <property type="term" value="P:Mo-molybdopterin cofactor biosynthetic process"/>
    <property type="evidence" value="ECO:0007669"/>
    <property type="project" value="UniProtKB-UniRule"/>
</dbReference>
<dbReference type="CDD" id="cd01420">
    <property type="entry name" value="MoaC_PE"/>
    <property type="match status" value="1"/>
</dbReference>
<dbReference type="FunFam" id="3.30.70.640:FF:000001">
    <property type="entry name" value="Cyclic pyranopterin monophosphate synthase"/>
    <property type="match status" value="1"/>
</dbReference>
<dbReference type="Gene3D" id="3.30.70.640">
    <property type="entry name" value="Molybdopterin cofactor biosynthesis C (MoaC) domain"/>
    <property type="match status" value="1"/>
</dbReference>
<dbReference type="HAMAP" id="MF_01224_B">
    <property type="entry name" value="MoaC_B"/>
    <property type="match status" value="1"/>
</dbReference>
<dbReference type="InterPro" id="IPR023045">
    <property type="entry name" value="MoaC"/>
</dbReference>
<dbReference type="InterPro" id="IPR047594">
    <property type="entry name" value="MoaC_bact/euk"/>
</dbReference>
<dbReference type="InterPro" id="IPR036522">
    <property type="entry name" value="MoaC_sf"/>
</dbReference>
<dbReference type="InterPro" id="IPR050105">
    <property type="entry name" value="MoCo_biosynth_MoaA/MoaC"/>
</dbReference>
<dbReference type="InterPro" id="IPR002820">
    <property type="entry name" value="Mopterin_CF_biosynth-C_dom"/>
</dbReference>
<dbReference type="NCBIfam" id="TIGR00581">
    <property type="entry name" value="moaC"/>
    <property type="match status" value="1"/>
</dbReference>
<dbReference type="NCBIfam" id="NF006870">
    <property type="entry name" value="PRK09364.1"/>
    <property type="match status" value="1"/>
</dbReference>
<dbReference type="PANTHER" id="PTHR22960">
    <property type="entry name" value="MOLYBDOPTERIN COFACTOR SYNTHESIS PROTEIN A"/>
    <property type="match status" value="1"/>
</dbReference>
<dbReference type="Pfam" id="PF01967">
    <property type="entry name" value="MoaC"/>
    <property type="match status" value="1"/>
</dbReference>
<dbReference type="SUPFAM" id="SSF55040">
    <property type="entry name" value="Molybdenum cofactor biosynthesis protein C, MoaC"/>
    <property type="match status" value="1"/>
</dbReference>
<sequence>MSQLTHINAAGEAHMVDVSAKAETVREARAEAFVTMLPETLAMIIDGSHHKGDVFATARIAGIQAAKRTWDLIPLCHPLMLSKVEVNLLADPEHSRVRIESLCRLTGKTGVEMEALTAASVAALTIYDMCKAVQKDMVIGPVRLLTKSGGKSGDFKADSHD</sequence>
<keyword id="KW-0456">Lyase</keyword>
<keyword id="KW-0501">Molybdenum cofactor biosynthesis</keyword>
<evidence type="ECO:0000255" key="1">
    <source>
        <dbReference type="HAMAP-Rule" id="MF_01224"/>
    </source>
</evidence>
<accession>A4W8C6</accession>
<gene>
    <name evidence="1" type="primary">moaC</name>
    <name type="ordered locus">Ent638_1275</name>
</gene>
<name>MOAC_ENT38</name>
<protein>
    <recommendedName>
        <fullName evidence="1">Cyclic pyranopterin monophosphate synthase</fullName>
        <ecNumber evidence="1">4.6.1.17</ecNumber>
    </recommendedName>
    <alternativeName>
        <fullName evidence="1">Molybdenum cofactor biosynthesis protein C</fullName>
    </alternativeName>
</protein>
<feature type="chain" id="PRO_1000066800" description="Cyclic pyranopterin monophosphate synthase">
    <location>
        <begin position="1"/>
        <end position="161"/>
    </location>
</feature>
<feature type="active site" evidence="1">
    <location>
        <position position="128"/>
    </location>
</feature>
<feature type="binding site" evidence="1">
    <location>
        <begin position="75"/>
        <end position="77"/>
    </location>
    <ligand>
        <name>substrate</name>
    </ligand>
</feature>
<feature type="binding site" evidence="1">
    <location>
        <begin position="113"/>
        <end position="114"/>
    </location>
    <ligand>
        <name>substrate</name>
    </ligand>
</feature>
<proteinExistence type="inferred from homology"/>
<reference key="1">
    <citation type="journal article" date="2010" name="PLoS Genet.">
        <title>Genome sequence of the plant growth promoting endophytic bacterium Enterobacter sp. 638.</title>
        <authorList>
            <person name="Taghavi S."/>
            <person name="van der Lelie D."/>
            <person name="Hoffman A."/>
            <person name="Zhang Y.B."/>
            <person name="Walla M.D."/>
            <person name="Vangronsveld J."/>
            <person name="Newman L."/>
            <person name="Monchy S."/>
        </authorList>
    </citation>
    <scope>NUCLEOTIDE SEQUENCE [LARGE SCALE GENOMIC DNA]</scope>
    <source>
        <strain>638</strain>
    </source>
</reference>
<organism>
    <name type="scientific">Enterobacter sp. (strain 638)</name>
    <dbReference type="NCBI Taxonomy" id="399742"/>
    <lineage>
        <taxon>Bacteria</taxon>
        <taxon>Pseudomonadati</taxon>
        <taxon>Pseudomonadota</taxon>
        <taxon>Gammaproteobacteria</taxon>
        <taxon>Enterobacterales</taxon>
        <taxon>Enterobacteriaceae</taxon>
        <taxon>Enterobacter</taxon>
    </lineage>
</organism>